<sequence length="67" mass="7743">MPSKNCAKNLHACQWERDIALVFLGLMVLFNIGQVVYMNRARLYRLIRRGAEQIPADDEEPIIGIRD</sequence>
<evidence type="ECO:0000255" key="1"/>
<evidence type="ECO:0000269" key="2">
    <source>
    </source>
</evidence>
<evidence type="ECO:0000303" key="3">
    <source>
    </source>
</evidence>
<evidence type="ECO:0000305" key="4"/>
<evidence type="ECO:0000312" key="5">
    <source>
        <dbReference type="EMBL" id="CCD64773.1"/>
    </source>
</evidence>
<evidence type="ECO:0000312" key="6">
    <source>
        <dbReference type="WormBase" id="F14B8.2"/>
    </source>
</evidence>
<proteinExistence type="evidence at protein level"/>
<protein>
    <recommendedName>
        <fullName evidence="3">Systemic RNA interference defective protein 5</fullName>
    </recommendedName>
</protein>
<keyword id="KW-0967">Endosome</keyword>
<keyword id="KW-0472">Membrane</keyword>
<keyword id="KW-1185">Reference proteome</keyword>
<keyword id="KW-0943">RNA-mediated gene silencing</keyword>
<keyword id="KW-0812">Transmembrane</keyword>
<keyword id="KW-1133">Transmembrane helix</keyword>
<keyword id="KW-0813">Transport</keyword>
<comment type="function">
    <text evidence="2">Plays a role in RNA-mediated gene silencing by mediating transport of both ingested and endogenous dsRNA between cells. Not required for the uptake of dsRNA from the intestinal lumen.</text>
</comment>
<comment type="subcellular location">
    <subcellularLocation>
        <location evidence="2">Late endosome membrane</location>
        <topology evidence="1 2">Single-pass membrane protein</topology>
    </subcellularLocation>
</comment>
<comment type="tissue specificity">
    <text evidence="2">Ubiquitously present in most tissues tested. Expressed in the somatic cells of intestine, muscle, neurons, somatic gonad and embryos but not in the germline (at protein level).</text>
</comment>
<comment type="disruption phenotype">
    <text evidence="2">Defective in RNA-mediated gene silencing.</text>
</comment>
<feature type="chain" id="PRO_0000423413" description="Systemic RNA interference defective protein 5">
    <location>
        <begin position="1"/>
        <end position="67"/>
    </location>
</feature>
<feature type="topological domain" description="Extracellular" evidence="1">
    <location>
        <begin position="1"/>
        <end position="18"/>
    </location>
</feature>
<feature type="transmembrane region" description="Helical" evidence="1">
    <location>
        <begin position="19"/>
        <end position="39"/>
    </location>
</feature>
<feature type="topological domain" description="Cytoplasmic" evidence="1">
    <location>
        <begin position="40"/>
        <end position="67"/>
    </location>
</feature>
<feature type="mutagenesis site" description="In qt23; induces defects in RNA silencing." evidence="2">
    <original>E</original>
    <variation>K</variation>
    <location>
        <position position="16"/>
    </location>
</feature>
<feature type="mutagenesis site" description="In qt34; induces defects in RNA silencing." evidence="2">
    <original>L</original>
    <variation>P</variation>
    <location>
        <position position="43"/>
    </location>
</feature>
<reference evidence="5" key="1">
    <citation type="journal article" date="1998" name="Science">
        <title>Genome sequence of the nematode C. elegans: a platform for investigating biology.</title>
        <authorList>
            <consortium name="The C. elegans sequencing consortium"/>
        </authorList>
    </citation>
    <scope>NUCLEOTIDE SEQUENCE [LARGE SCALE GENOMIC DNA]</scope>
    <source>
        <strain evidence="5">Bristol N2</strain>
    </source>
</reference>
<reference evidence="4" key="2">
    <citation type="journal article" date="2012" name="Curr. Biol.">
        <title>SID-5 is an endosome-associated protein required for efficient systemic RNAi in C. elegans.</title>
        <authorList>
            <person name="Hinas A."/>
            <person name="Wright A.J."/>
            <person name="Hunter C.P."/>
        </authorList>
    </citation>
    <scope>FUNCTION</scope>
    <scope>SUBCELLULAR LOCATION</scope>
    <scope>TISSUE SPECIFICITY</scope>
    <scope>DISRUPTION PHENOTYPE</scope>
    <scope>MUTAGENESIS OF GLU-16 AND LEU-43</scope>
</reference>
<name>SID5_CAEEL</name>
<dbReference type="EMBL" id="FO080573">
    <property type="protein sequence ID" value="CCD64773.1"/>
    <property type="molecule type" value="Genomic_DNA"/>
</dbReference>
<dbReference type="PIR" id="T16071">
    <property type="entry name" value="T16071"/>
</dbReference>
<dbReference type="RefSeq" id="NP_509168.1">
    <property type="nucleotide sequence ID" value="NM_076767.6"/>
</dbReference>
<dbReference type="SMR" id="Q19443"/>
<dbReference type="BioGRID" id="49241">
    <property type="interactions" value="1"/>
</dbReference>
<dbReference type="FunCoup" id="Q19443">
    <property type="interactions" value="774"/>
</dbReference>
<dbReference type="STRING" id="6239.F14B8.2.1"/>
<dbReference type="PaxDb" id="6239-F14B8.2"/>
<dbReference type="PeptideAtlas" id="Q19443"/>
<dbReference type="EnsemblMetazoa" id="F14B8.2.1">
    <property type="protein sequence ID" value="F14B8.2.1"/>
    <property type="gene ID" value="WBGene00017445"/>
</dbReference>
<dbReference type="GeneID" id="184450"/>
<dbReference type="KEGG" id="cel:CELE_F14B8.2"/>
<dbReference type="UCSC" id="F14B8.2">
    <property type="organism name" value="c. elegans"/>
</dbReference>
<dbReference type="AGR" id="WB:WBGene00017445"/>
<dbReference type="CTD" id="184450"/>
<dbReference type="WormBase" id="F14B8.2">
    <property type="protein sequence ID" value="CE02645"/>
    <property type="gene ID" value="WBGene00017445"/>
    <property type="gene designation" value="sid-5"/>
</dbReference>
<dbReference type="eggNOG" id="ENOG502TJ0V">
    <property type="taxonomic scope" value="Eukaryota"/>
</dbReference>
<dbReference type="HOGENOM" id="CLU_2796393_0_0_1"/>
<dbReference type="InParanoid" id="Q19443"/>
<dbReference type="OMA" id="CQWERDI"/>
<dbReference type="OrthoDB" id="5832041at2759"/>
<dbReference type="PRO" id="PR:Q19443"/>
<dbReference type="Proteomes" id="UP000001940">
    <property type="component" value="Chromosome X"/>
</dbReference>
<dbReference type="Bgee" id="WBGene00017445">
    <property type="expression patterns" value="Expressed in embryo and 4 other cell types or tissues"/>
</dbReference>
<dbReference type="GO" id="GO:0005770">
    <property type="term" value="C:late endosome"/>
    <property type="evidence" value="ECO:0000314"/>
    <property type="project" value="WormBase"/>
</dbReference>
<dbReference type="GO" id="GO:0031902">
    <property type="term" value="C:late endosome membrane"/>
    <property type="evidence" value="ECO:0007669"/>
    <property type="project" value="UniProtKB-SubCell"/>
</dbReference>
<dbReference type="GO" id="GO:0035194">
    <property type="term" value="P:regulatory ncRNA-mediated post-transcriptional gene silencing"/>
    <property type="evidence" value="ECO:0000315"/>
    <property type="project" value="WormBase"/>
</dbReference>
<dbReference type="GO" id="GO:0050658">
    <property type="term" value="P:RNA transport"/>
    <property type="evidence" value="ECO:0000314"/>
    <property type="project" value="UniProtKB"/>
</dbReference>
<dbReference type="InterPro" id="IPR033759">
    <property type="entry name" value="Sid-5"/>
</dbReference>
<dbReference type="Pfam" id="PF17204">
    <property type="entry name" value="Sid-5"/>
    <property type="match status" value="1"/>
</dbReference>
<gene>
    <name evidence="5 6" type="primary">sid-5</name>
    <name type="ORF">F14B8.2</name>
</gene>
<organism>
    <name type="scientific">Caenorhabditis elegans</name>
    <dbReference type="NCBI Taxonomy" id="6239"/>
    <lineage>
        <taxon>Eukaryota</taxon>
        <taxon>Metazoa</taxon>
        <taxon>Ecdysozoa</taxon>
        <taxon>Nematoda</taxon>
        <taxon>Chromadorea</taxon>
        <taxon>Rhabditida</taxon>
        <taxon>Rhabditina</taxon>
        <taxon>Rhabditomorpha</taxon>
        <taxon>Rhabditoidea</taxon>
        <taxon>Rhabditidae</taxon>
        <taxon>Peloderinae</taxon>
        <taxon>Caenorhabditis</taxon>
    </lineage>
</organism>
<accession>Q19443</accession>